<evidence type="ECO:0000250" key="1">
    <source>
        <dbReference type="UniProtKB" id="Q85318"/>
    </source>
</evidence>
<evidence type="ECO:0000255" key="2">
    <source>
        <dbReference type="PROSITE-ProRule" id="PRU00175"/>
    </source>
</evidence>
<evidence type="ECO:0000255" key="3">
    <source>
        <dbReference type="PROSITE-ProRule" id="PRU00631"/>
    </source>
</evidence>
<evidence type="ECO:0000305" key="4"/>
<gene>
    <name type="primary">OPG021</name>
    <name type="synonym">p28</name>
    <name type="ORF">D4R</name>
</gene>
<dbReference type="EC" id="2.3.2.27"/>
<dbReference type="EMBL" id="X69198">
    <property type="protein sequence ID" value="CAA48945.1"/>
    <property type="molecule type" value="Genomic_DNA"/>
</dbReference>
<dbReference type="RefSeq" id="NP_042048.1">
    <property type="nucleotide sequence ID" value="NC_001611.1"/>
</dbReference>
<dbReference type="GeneID" id="1486399"/>
<dbReference type="KEGG" id="vg:1486399"/>
<dbReference type="Proteomes" id="UP000002060">
    <property type="component" value="Segment"/>
</dbReference>
<dbReference type="GO" id="GO:0030430">
    <property type="term" value="C:host cell cytoplasm"/>
    <property type="evidence" value="ECO:0007669"/>
    <property type="project" value="UniProtKB-SubCell"/>
</dbReference>
<dbReference type="GO" id="GO:0016881">
    <property type="term" value="F:acid-amino acid ligase activity"/>
    <property type="evidence" value="ECO:0007669"/>
    <property type="project" value="InterPro"/>
</dbReference>
<dbReference type="GO" id="GO:0061630">
    <property type="term" value="F:ubiquitin protein ligase activity"/>
    <property type="evidence" value="ECO:0007669"/>
    <property type="project" value="InterPro"/>
</dbReference>
<dbReference type="GO" id="GO:0008270">
    <property type="term" value="F:zinc ion binding"/>
    <property type="evidence" value="ECO:0007669"/>
    <property type="project" value="UniProtKB-KW"/>
</dbReference>
<dbReference type="GO" id="GO:0000209">
    <property type="term" value="P:protein polyubiquitination"/>
    <property type="evidence" value="ECO:0007669"/>
    <property type="project" value="InterPro"/>
</dbReference>
<dbReference type="GO" id="GO:0052150">
    <property type="term" value="P:symbiont-mediated perturbation of host apoptosis"/>
    <property type="evidence" value="ECO:0007669"/>
    <property type="project" value="UniProtKB-KW"/>
</dbReference>
<dbReference type="GO" id="GO:0039648">
    <property type="term" value="P:symbiont-mediated perturbation of host ubiquitin-like protein modification"/>
    <property type="evidence" value="ECO:0007669"/>
    <property type="project" value="UniProtKB-KW"/>
</dbReference>
<dbReference type="Gene3D" id="3.30.40.10">
    <property type="entry name" value="Zinc/RING finger domain, C3HC4 (zinc finger)"/>
    <property type="match status" value="1"/>
</dbReference>
<dbReference type="InterPro" id="IPR016398">
    <property type="entry name" value="E3_ubiquitin-prot_ligase_p28"/>
</dbReference>
<dbReference type="InterPro" id="IPR018004">
    <property type="entry name" value="KilA/APSES_HTH"/>
</dbReference>
<dbReference type="InterPro" id="IPR017880">
    <property type="entry name" value="KilA_N"/>
</dbReference>
<dbReference type="InterPro" id="IPR045072">
    <property type="entry name" value="MKRN-like"/>
</dbReference>
<dbReference type="InterPro" id="IPR001841">
    <property type="entry name" value="Znf_RING"/>
</dbReference>
<dbReference type="InterPro" id="IPR013083">
    <property type="entry name" value="Znf_RING/FYVE/PHD"/>
</dbReference>
<dbReference type="InterPro" id="IPR017907">
    <property type="entry name" value="Znf_RING_CS"/>
</dbReference>
<dbReference type="PANTHER" id="PTHR11224:SF10">
    <property type="entry name" value="IP09428P-RELATED"/>
    <property type="match status" value="1"/>
</dbReference>
<dbReference type="PANTHER" id="PTHR11224">
    <property type="entry name" value="MAKORIN-RELATED"/>
    <property type="match status" value="1"/>
</dbReference>
<dbReference type="Pfam" id="PF04383">
    <property type="entry name" value="KilA-N"/>
    <property type="match status" value="1"/>
</dbReference>
<dbReference type="Pfam" id="PF13639">
    <property type="entry name" value="zf-RING_2"/>
    <property type="match status" value="1"/>
</dbReference>
<dbReference type="PIRSF" id="PIRSF003775">
    <property type="entry name" value="E3_ubiquit_lig_p28"/>
    <property type="match status" value="1"/>
</dbReference>
<dbReference type="SMART" id="SM00184">
    <property type="entry name" value="RING"/>
    <property type="match status" value="1"/>
</dbReference>
<dbReference type="SUPFAM" id="SSF57850">
    <property type="entry name" value="RING/U-box"/>
    <property type="match status" value="1"/>
</dbReference>
<dbReference type="PROSITE" id="PS51301">
    <property type="entry name" value="KILA_N"/>
    <property type="match status" value="1"/>
</dbReference>
<dbReference type="PROSITE" id="PS00518">
    <property type="entry name" value="ZF_RING_1"/>
    <property type="match status" value="1"/>
</dbReference>
<dbReference type="PROSITE" id="PS50089">
    <property type="entry name" value="ZF_RING_2"/>
    <property type="match status" value="1"/>
</dbReference>
<proteinExistence type="inferred from homology"/>
<protein>
    <recommendedName>
        <fullName>Host range factor p28</fullName>
        <ecNumber>2.3.2.27</ecNumber>
    </recommendedName>
    <alternativeName>
        <fullName>D4R protein</fullName>
    </alternativeName>
    <alternativeName>
        <fullName>E3 ubiquitin-protein ligase p28</fullName>
    </alternativeName>
</protein>
<organismHost>
    <name type="scientific">Homo sapiens</name>
    <name type="common">Human</name>
    <dbReference type="NCBI Taxonomy" id="9606"/>
</organismHost>
<name>PG021_VAR67</name>
<feature type="chain" id="PRO_0000395990" description="Host range factor p28">
    <location>
        <begin position="1"/>
        <end position="242"/>
    </location>
</feature>
<feature type="domain" description="KilA-N" evidence="3">
    <location>
        <begin position="21"/>
        <end position="131"/>
    </location>
</feature>
<feature type="zinc finger region" description="RING-type" evidence="2">
    <location>
        <begin position="173"/>
        <end position="226"/>
    </location>
</feature>
<sequence>MEFDPTKINISSIDHVTILQYIDEPNDIRLTVCIIQNINNITYYINITKINPHLANQFRAWKKRIAGRDYMTNLSRDTGIQQSNLTETIRNCQKNRNIYGLYIHYNLVINVVIDWITDVIVQSILRGLVNWYIDNNTYTPNTPNNTTTISELDIIKILDKYEDVYKVSKEKECGICYEVVYSKRLENDRYFGLLDSCNHIFCITCINIWHRTRRETGASDNCPICRTRFRNITMSKFYKLVN</sequence>
<comment type="function">
    <text evidence="1">RING-finger E3 ubiquitin ligase which catalyzes the formation of both 'Lys-48'- and 'Lys-63'-linked polyubiquitin chains. Plays an important role in virulence by acting as an anti-apoptotic factor.</text>
</comment>
<comment type="catalytic activity">
    <reaction>
        <text>S-ubiquitinyl-[E2 ubiquitin-conjugating enzyme]-L-cysteine + [acceptor protein]-L-lysine = [E2 ubiquitin-conjugating enzyme]-L-cysteine + N(6)-ubiquitinyl-[acceptor protein]-L-lysine.</text>
        <dbReference type="EC" id="2.3.2.27"/>
    </reaction>
</comment>
<comment type="subcellular location">
    <subcellularLocation>
        <location>Host cytoplasm</location>
    </subcellularLocation>
    <text evidence="1">Localizes to viral factories, the sites of virus replication.</text>
</comment>
<comment type="similarity">
    <text evidence="4">Belongs to the orthopoxvirus OPG021 family.</text>
</comment>
<organism>
    <name type="scientific">Variola virus (isolate Human/India/Ind3/1967)</name>
    <name type="common">VARV</name>
    <name type="synonym">Smallpox virus</name>
    <dbReference type="NCBI Taxonomy" id="587200"/>
    <lineage>
        <taxon>Viruses</taxon>
        <taxon>Varidnaviria</taxon>
        <taxon>Bamfordvirae</taxon>
        <taxon>Nucleocytoviricota</taxon>
        <taxon>Pokkesviricetes</taxon>
        <taxon>Chitovirales</taxon>
        <taxon>Poxviridae</taxon>
        <taxon>Chordopoxvirinae</taxon>
        <taxon>Orthopoxvirus</taxon>
        <taxon>Variola virus</taxon>
    </lineage>
</organism>
<keyword id="KW-1035">Host cytoplasm</keyword>
<keyword id="KW-0945">Host-virus interaction</keyword>
<keyword id="KW-0479">Metal-binding</keyword>
<keyword id="KW-1119">Modulation of host cell apoptosis by virus</keyword>
<keyword id="KW-1128">Modulation of host ubiquitin pathway by viral E3 ligase</keyword>
<keyword id="KW-1130">Modulation of host ubiquitin pathway by virus</keyword>
<keyword id="KW-1185">Reference proteome</keyword>
<keyword id="KW-0808">Transferase</keyword>
<keyword id="KW-0833">Ubl conjugation pathway</keyword>
<keyword id="KW-0862">Zinc</keyword>
<keyword id="KW-0863">Zinc-finger</keyword>
<accession>Q76R05</accession>
<reference key="1">
    <citation type="journal article" date="1993" name="FEBS Lett.">
        <title>Genes of variola and vaccinia viruses necessary to overcome the host protective mechanisms.</title>
        <authorList>
            <person name="Shchelkunov S.N."/>
            <person name="Blinov V.M."/>
            <person name="Sandakhchiev L.S."/>
        </authorList>
    </citation>
    <scope>NUCLEOTIDE SEQUENCE [GENOMIC DNA]</scope>
    <source>
        <strain>India-1967</strain>
    </source>
</reference>
<reference key="2">
    <citation type="journal article" date="1994" name="Virus Res.">
        <title>Analysis of the nucleotide sequence of 53 kbp from the right terminus of the genome of variola major virus strain India-1967.</title>
        <authorList>
            <person name="Shchelkunov S.N."/>
            <person name="Blinov V.M."/>
            <person name="Resenchuk S.M."/>
            <person name="Totmenin A.V."/>
            <person name="Olenina L.V."/>
            <person name="Chirikova G.B."/>
            <person name="Sandakhchiev L.S."/>
        </authorList>
    </citation>
    <scope>NUCLEOTIDE SEQUENCE [GENOMIC DNA]</scope>
    <source>
        <strain>India-1967</strain>
    </source>
</reference>
<reference key="3">
    <citation type="journal article" date="1996" name="Virus Res.">
        <title>Analysis of the nucleotide sequence of 23.8 kbp from the left terminus of the genome of variola major virus strain India-1967.</title>
        <authorList>
            <person name="Shchelkunov S.N."/>
            <person name="Totmenin A.V."/>
            <person name="Sandakhchiev L.S."/>
        </authorList>
    </citation>
    <scope>NUCLEOTIDE SEQUENCE [GENOMIC DNA]</scope>
    <source>
        <strain>India-1967</strain>
    </source>
</reference>